<feature type="chain" id="PRO_0000107032" description="Uncharacterized protein MJ0782.1">
    <location>
        <begin position="1"/>
        <end position="81"/>
    </location>
</feature>
<protein>
    <recommendedName>
        <fullName>Uncharacterized protein MJ0782.1</fullName>
    </recommendedName>
</protein>
<organism>
    <name type="scientific">Methanocaldococcus jannaschii (strain ATCC 43067 / DSM 2661 / JAL-1 / JCM 10045 / NBRC 100440)</name>
    <name type="common">Methanococcus jannaschii</name>
    <dbReference type="NCBI Taxonomy" id="243232"/>
    <lineage>
        <taxon>Archaea</taxon>
        <taxon>Methanobacteriati</taxon>
        <taxon>Methanobacteriota</taxon>
        <taxon>Methanomada group</taxon>
        <taxon>Methanococci</taxon>
        <taxon>Methanococcales</taxon>
        <taxon>Methanocaldococcaceae</taxon>
        <taxon>Methanocaldococcus</taxon>
    </lineage>
</organism>
<keyword id="KW-1185">Reference proteome</keyword>
<dbReference type="EMBL" id="L77117">
    <property type="protein sequence ID" value="AAB98772.1"/>
    <property type="molecule type" value="Genomic_DNA"/>
</dbReference>
<dbReference type="RefSeq" id="WP_010870288.1">
    <property type="nucleotide sequence ID" value="NC_000909.1"/>
</dbReference>
<dbReference type="SMR" id="P81312"/>
<dbReference type="FunCoup" id="P81312">
    <property type="interactions" value="2"/>
</dbReference>
<dbReference type="STRING" id="243232.MJ_0782.1"/>
<dbReference type="PaxDb" id="243232-MJ_0782.1"/>
<dbReference type="EnsemblBacteria" id="AAB98772">
    <property type="protein sequence ID" value="AAB98772"/>
    <property type="gene ID" value="MJ_0782.1"/>
</dbReference>
<dbReference type="GeneID" id="1451660"/>
<dbReference type="KEGG" id="mja:MJ_0782.1"/>
<dbReference type="eggNOG" id="arCOG02466">
    <property type="taxonomic scope" value="Archaea"/>
</dbReference>
<dbReference type="HOGENOM" id="CLU_165884_4_0_2"/>
<dbReference type="InParanoid" id="P81312"/>
<dbReference type="OrthoDB" id="60264at2157"/>
<dbReference type="Proteomes" id="UP000000805">
    <property type="component" value="Chromosome"/>
</dbReference>
<dbReference type="Gene3D" id="2.40.10.230">
    <property type="entry name" value="Probable tRNA pseudouridine synthase domain"/>
    <property type="match status" value="1"/>
</dbReference>
<dbReference type="InterPro" id="IPR038664">
    <property type="entry name" value="Gar1/Naf1_Cbf5-bd_sf"/>
</dbReference>
<dbReference type="InterPro" id="IPR009000">
    <property type="entry name" value="Transl_B-barrel_sf"/>
</dbReference>
<dbReference type="NCBIfam" id="NF009632">
    <property type="entry name" value="PRK13149.2-3"/>
    <property type="match status" value="1"/>
</dbReference>
<dbReference type="SUPFAM" id="SSF50447">
    <property type="entry name" value="Translation proteins"/>
    <property type="match status" value="1"/>
</dbReference>
<name>Y78A_METJA</name>
<comment type="similarity">
    <text evidence="1">To M.thermoautotrophicum MTH886.</text>
</comment>
<gene>
    <name type="ordered locus">MJ0782.1</name>
</gene>
<reference key="1">
    <citation type="journal article" date="1996" name="Science">
        <title>Complete genome sequence of the methanogenic archaeon, Methanococcus jannaschii.</title>
        <authorList>
            <person name="Bult C.J."/>
            <person name="White O."/>
            <person name="Olsen G.J."/>
            <person name="Zhou L."/>
            <person name="Fleischmann R.D."/>
            <person name="Sutton G.G."/>
            <person name="Blake J.A."/>
            <person name="FitzGerald L.M."/>
            <person name="Clayton R.A."/>
            <person name="Gocayne J.D."/>
            <person name="Kerlavage A.R."/>
            <person name="Dougherty B.A."/>
            <person name="Tomb J.-F."/>
            <person name="Adams M.D."/>
            <person name="Reich C.I."/>
            <person name="Overbeek R."/>
            <person name="Kirkness E.F."/>
            <person name="Weinstock K.G."/>
            <person name="Merrick J.M."/>
            <person name="Glodek A."/>
            <person name="Scott J.L."/>
            <person name="Geoghagen N.S.M."/>
            <person name="Weidman J.F."/>
            <person name="Fuhrmann J.L."/>
            <person name="Nguyen D."/>
            <person name="Utterback T.R."/>
            <person name="Kelley J.M."/>
            <person name="Peterson J.D."/>
            <person name="Sadow P.W."/>
            <person name="Hanna M.C."/>
            <person name="Cotton M.D."/>
            <person name="Roberts K.M."/>
            <person name="Hurst M.A."/>
            <person name="Kaine B.P."/>
            <person name="Borodovsky M."/>
            <person name="Klenk H.-P."/>
            <person name="Fraser C.M."/>
            <person name="Smith H.O."/>
            <person name="Woese C.R."/>
            <person name="Venter J.C."/>
        </authorList>
    </citation>
    <scope>NUCLEOTIDE SEQUENCE [LARGE SCALE GENOMIC DNA]</scope>
    <source>
        <strain>ATCC 43067 / DSM 2661 / JAL-1 / JCM 10045 / NBRC 100440</strain>
    </source>
</reference>
<sequence>MKVEILHKTPKGFLIARGKREIKIGSVVIFKNKKIGKVVDIFGPVAKPYIKILPINKDIEVSGTAYIKNDKSKYKNTEKKN</sequence>
<proteinExistence type="predicted"/>
<accession>P81312</accession>
<evidence type="ECO:0000305" key="1"/>